<comment type="function">
    <text evidence="2 3 4">Catalyzes the desaturation of oleic acid (Delta(9)-18:1) to linoleic acid (Delta(9), Delta(12)-18:2).</text>
</comment>
<comment type="catalytic activity">
    <reaction evidence="2 3">
        <text>(9Z)-octadecenoyl-CoA + 2 Fe(II)-[cytochrome b5] + O2 + 2 H(+) = (9Z,12Z)-octadecadienoyl-CoA + 2 Fe(III)-[cytochrome b5] + 2 H2O</text>
        <dbReference type="Rhea" id="RHEA:25856"/>
        <dbReference type="Rhea" id="RHEA-COMP:10438"/>
        <dbReference type="Rhea" id="RHEA-COMP:10439"/>
        <dbReference type="ChEBI" id="CHEBI:15377"/>
        <dbReference type="ChEBI" id="CHEBI:15378"/>
        <dbReference type="ChEBI" id="CHEBI:15379"/>
        <dbReference type="ChEBI" id="CHEBI:29033"/>
        <dbReference type="ChEBI" id="CHEBI:29034"/>
        <dbReference type="ChEBI" id="CHEBI:57383"/>
        <dbReference type="ChEBI" id="CHEBI:57387"/>
        <dbReference type="EC" id="1.14.19.6"/>
    </reaction>
</comment>
<comment type="catalytic activity">
    <reaction evidence="2 3">
        <text>(9Z)-hexadecenoyl-CoA + 2 Fe(II)-[cytochrome b5] + O2 + 2 H(+) = (9Z,12Z)-hexadecadienoyl-CoA + 2 Fe(III)-[cytochrome b5] + 2 H2O</text>
        <dbReference type="Rhea" id="RHEA:45096"/>
        <dbReference type="Rhea" id="RHEA-COMP:10438"/>
        <dbReference type="Rhea" id="RHEA-COMP:10439"/>
        <dbReference type="ChEBI" id="CHEBI:15377"/>
        <dbReference type="ChEBI" id="CHEBI:15378"/>
        <dbReference type="ChEBI" id="CHEBI:15379"/>
        <dbReference type="ChEBI" id="CHEBI:29033"/>
        <dbReference type="ChEBI" id="CHEBI:29034"/>
        <dbReference type="ChEBI" id="CHEBI:61540"/>
        <dbReference type="ChEBI" id="CHEBI:76552"/>
        <dbReference type="EC" id="1.14.19.6"/>
    </reaction>
</comment>
<comment type="pathway">
    <text>Lipid metabolism; polyunsaturated fatty acid biosynthesis.</text>
</comment>
<comment type="subcellular location">
    <subcellularLocation>
        <location evidence="5">Membrane</location>
        <topology evidence="5">Multi-pass membrane protein</topology>
    </subcellularLocation>
</comment>
<comment type="domain">
    <text evidence="5">The histidine box domains may contain the active site and/or be involved in metal ion binding.</text>
</comment>
<comment type="similarity">
    <text evidence="5">Belongs to the fatty acid desaturase type 1 family.</text>
</comment>
<protein>
    <recommendedName>
        <fullName>Delta(12) fatty acid desaturase</fullName>
        <ecNumber evidence="2 3">1.14.19.6</ecNumber>
    </recommendedName>
    <alternativeName>
        <fullName>Delta-12 fatty acid desaturase</fullName>
    </alternativeName>
</protein>
<proteinExistence type="evidence at protein level"/>
<name>FAD12_MORAP</name>
<accession>Q9Y8H5</accession>
<accession>Q96TH3</accession>
<accession>Q9UVV4</accession>
<sequence>MAPPNTIDAGLTQRHISTSAAPTSAKPAFERNYQLPEFTIKEIRECIPAHCFERSGLRGLCHVAIDLTWASLLFLAATQIDKFENPLIRYLAWPAYWIMQGIVCTGIWVLAHECGHQSFSTSKTLNNTVGWILHSMLLVPYHSWRISHSKHHKATGHMTKDQVFVPKTRSQVGLPPKENAAAAVQEEDMSVHLDEEAPIVTLFWMVIQFLFGWPAYLIMNASGQDYGRWTSHFHTYSPIFEPRNFFDIIISDLGVLAALGALIYASMQLSLLTVTKYYIVPYLFVNFWLVLITFLQHTDPKLPHYREGAWNFQRGALCTVDRSFGKFLDHMFHGIVHTHVAHHLFSQMPFYHAEEATYHLKKLLGEYYVYDPSPIVVAVWRSFRECRFVEDHGDVVFFKK</sequence>
<organism>
    <name type="scientific">Mortierella alpina</name>
    <name type="common">Oleaginous fungus</name>
    <name type="synonym">Mortierella renispora</name>
    <dbReference type="NCBI Taxonomy" id="64518"/>
    <lineage>
        <taxon>Eukaryota</taxon>
        <taxon>Fungi</taxon>
        <taxon>Fungi incertae sedis</taxon>
        <taxon>Mucoromycota</taxon>
        <taxon>Mortierellomycotina</taxon>
        <taxon>Mortierellomycetes</taxon>
        <taxon>Mortierellales</taxon>
        <taxon>Mortierellaceae</taxon>
        <taxon>Mortierella</taxon>
    </lineage>
</organism>
<dbReference type="EC" id="1.14.19.6" evidence="2 3"/>
<dbReference type="EMBL" id="AB020033">
    <property type="protein sequence ID" value="BAA81754.1"/>
    <property type="molecule type" value="mRNA"/>
</dbReference>
<dbReference type="EMBL" id="AF110509">
    <property type="protein sequence ID" value="AAF08684.1"/>
    <property type="molecule type" value="mRNA"/>
</dbReference>
<dbReference type="EMBL" id="AF417244">
    <property type="protein sequence ID" value="AAL13300.1"/>
    <property type="molecule type" value="Genomic_DNA"/>
</dbReference>
<dbReference type="BioCyc" id="MetaCyc:MONOMER-16938"/>
<dbReference type="BRENDA" id="1.14.19.6">
    <property type="organism ID" value="3431"/>
</dbReference>
<dbReference type="UniPathway" id="UPA00658"/>
<dbReference type="GO" id="GO:0016020">
    <property type="term" value="C:membrane"/>
    <property type="evidence" value="ECO:0007669"/>
    <property type="project" value="UniProtKB-SubCell"/>
</dbReference>
<dbReference type="GO" id="GO:0102985">
    <property type="term" value="F:acyl-CoA (9+3)-desaturase activity"/>
    <property type="evidence" value="ECO:0007669"/>
    <property type="project" value="UniProtKB-EC"/>
</dbReference>
<dbReference type="GO" id="GO:0016491">
    <property type="term" value="F:oxidoreductase activity"/>
    <property type="evidence" value="ECO:0000314"/>
    <property type="project" value="UniProtKB"/>
</dbReference>
<dbReference type="GO" id="GO:0006633">
    <property type="term" value="P:fatty acid biosynthetic process"/>
    <property type="evidence" value="ECO:0000314"/>
    <property type="project" value="UniProtKB"/>
</dbReference>
<dbReference type="GO" id="GO:0006636">
    <property type="term" value="P:unsaturated fatty acid biosynthetic process"/>
    <property type="evidence" value="ECO:0007669"/>
    <property type="project" value="UniProtKB-UniPathway"/>
</dbReference>
<dbReference type="CDD" id="cd03507">
    <property type="entry name" value="Delta12-FADS-like"/>
    <property type="match status" value="1"/>
</dbReference>
<dbReference type="InterPro" id="IPR005804">
    <property type="entry name" value="FA_desaturase_dom"/>
</dbReference>
<dbReference type="InterPro" id="IPR012171">
    <property type="entry name" value="Fatty_acid_desaturase"/>
</dbReference>
<dbReference type="PANTHER" id="PTHR32100">
    <property type="entry name" value="OMEGA-6 FATTY ACID DESATURASE, CHLOROPLASTIC"/>
    <property type="match status" value="1"/>
</dbReference>
<dbReference type="Pfam" id="PF00487">
    <property type="entry name" value="FA_desaturase"/>
    <property type="match status" value="1"/>
</dbReference>
<feature type="chain" id="PRO_0000185422" description="Delta(12) fatty acid desaturase">
    <location>
        <begin position="1"/>
        <end position="400"/>
    </location>
</feature>
<feature type="transmembrane region" description="Helical" evidence="1">
    <location>
        <begin position="91"/>
        <end position="111"/>
    </location>
</feature>
<feature type="transmembrane region" description="Helical" evidence="1">
    <location>
        <begin position="199"/>
        <end position="219"/>
    </location>
</feature>
<feature type="transmembrane region" description="Helical" evidence="1">
    <location>
        <begin position="245"/>
        <end position="265"/>
    </location>
</feature>
<feature type="transmembrane region" description="Helical" evidence="1">
    <location>
        <begin position="277"/>
        <end position="297"/>
    </location>
</feature>
<feature type="short sequence motif" description="Histidine box-1">
    <location>
        <begin position="112"/>
        <end position="116"/>
    </location>
</feature>
<feature type="short sequence motif" description="Histidine box-2">
    <location>
        <begin position="148"/>
        <end position="152"/>
    </location>
</feature>
<feature type="short sequence motif" description="Histidine box-3">
    <location>
        <begin position="339"/>
        <end position="343"/>
    </location>
</feature>
<feature type="mutagenesis site" description="In SR88; exhibits a complete delta(12) desaturation deficiency with accumulation of Mead acid." evidence="4">
    <original>H</original>
    <variation>Y</variation>
    <location>
        <position position="116"/>
    </location>
</feature>
<feature type="mutagenesis site" description="In Mut48; exhibits a complete delta(12) desaturation deficiency with accumulation of Mead acid." evidence="4">
    <original>P</original>
    <variation>L</variation>
    <location>
        <position position="166"/>
    </location>
</feature>
<feature type="sequence conflict" description="In Ref. 3; AAL13300." evidence="5" ref="3">
    <original>STS</original>
    <variation>TTT</variation>
    <location>
        <begin position="17"/>
        <end position="19"/>
    </location>
</feature>
<feature type="sequence conflict" description="In Ref. 2; AAF08684." evidence="5" ref="2">
    <original>APT</original>
    <variation>PN</variation>
    <location>
        <begin position="21"/>
        <end position="23"/>
    </location>
</feature>
<feature type="sequence conflict" description="In Ref. 2; AAF08684." evidence="5" ref="2">
    <original>A</original>
    <variation>V</variation>
    <location>
        <position position="95"/>
    </location>
</feature>
<feature type="sequence conflict" description="In Ref. 2; AAF08684." evidence="5" ref="2">
    <original>I</original>
    <variation>V</variation>
    <location>
        <position position="107"/>
    </location>
</feature>
<feature type="sequence conflict" description="In Ref. 3; AAL13300." evidence="5" ref="3">
    <original>N</original>
    <variation>S</variation>
    <location>
        <position position="179"/>
    </location>
</feature>
<feature type="sequence conflict" description="In Ref. 1; BAA81754." evidence="5" ref="1">
    <original>AAA</original>
    <variation>VAV</variation>
    <location>
        <begin position="180"/>
        <end position="182"/>
    </location>
</feature>
<feature type="sequence conflict" description="In Ref. 1; BAA81754." evidence="5" ref="1">
    <original>A</original>
    <variation>T</variation>
    <location>
        <position position="261"/>
    </location>
</feature>
<feature type="sequence conflict" description="In Ref. 3; AAL13300." evidence="5" ref="3">
    <original>V</original>
    <variation>I</variation>
    <location>
        <position position="280"/>
    </location>
</feature>
<feature type="sequence conflict" description="In Ref. 1; BAA81754." evidence="5" ref="1">
    <original>Y</original>
    <variation>H</variation>
    <location>
        <position position="358"/>
    </location>
</feature>
<feature type="sequence conflict" description="In Ref. 2; AAF08684." evidence="5" ref="2">
    <original>H</original>
    <variation>Q</variation>
    <location>
        <position position="392"/>
    </location>
</feature>
<reference key="1">
    <citation type="journal article" date="1999" name="Eur. J. Biochem.">
        <title>Identification of delta12-fatty acid desaturase from arachidonic acid-producing Mortierella fungus by heterologous expression in the yeast Saccharomyces cerevisiae and the fungus Aspergillus oryzae.</title>
        <authorList>
            <person name="Sakuradani E."/>
            <person name="Kobayashi M."/>
            <person name="Ashikari T."/>
            <person name="Shimizu S."/>
        </authorList>
    </citation>
    <scope>NUCLEOTIDE SEQUENCE [MRNA]</scope>
    <scope>FUNCTION</scope>
    <scope>CATALYTIC ACTIVITY</scope>
    <source>
        <strain>1S-4</strain>
    </source>
</reference>
<reference key="2">
    <citation type="journal article" date="1999" name="Lipids">
        <title>Cloning of delta12- and delta6-desaturases from Mortierella alpina and recombinant production of gamma-linolenic acid in Saccharomyces cerevisiae.</title>
        <authorList>
            <person name="Huang Y.-S."/>
            <person name="Chaudhary S."/>
            <person name="Thurmond J.M."/>
            <person name="Bobik E.G. Jr."/>
            <person name="Yuan L."/>
            <person name="Chan G.M."/>
            <person name="Kirchner S.J."/>
            <person name="Mukerji P."/>
            <person name="Knutzon D.S."/>
        </authorList>
    </citation>
    <scope>NUCLEOTIDE SEQUENCE [MRNA]</scope>
    <scope>FUNCTION</scope>
    <scope>CATALYTIC ACTIVITY</scope>
    <source>
        <strain>ATCC 32221 / CBS 527.72 / M135</strain>
    </source>
</reference>
<reference key="3">
    <citation type="submission" date="2001-09" db="EMBL/GenBank/DDBJ databases">
        <title>Delta 12 fatty acid desaturase gene of Mortierella alpina.</title>
        <authorList>
            <person name="Liu L."/>
            <person name="Li M."/>
            <person name="Xing L."/>
            <person name="Hu G."/>
        </authorList>
    </citation>
    <scope>NUCLEOTIDE SEQUENCE [GENOMIC DNA]</scope>
    <source>
        <strain>ATCC 16266 / C 112</strain>
    </source>
</reference>
<reference key="4">
    <citation type="journal article" date="2009" name="J. Biosci. Bioeng.">
        <title>Identification of mutation sites on Delta12 desaturase genes from Mortierella alpina 1S-4 mutants.</title>
        <authorList>
            <person name="Sakuradani E."/>
            <person name="Abe T."/>
            <person name="Matsumura K."/>
            <person name="Tomi A."/>
            <person name="Shimizu S."/>
        </authorList>
    </citation>
    <scope>FUNCTION</scope>
    <scope>MUTAGENESIS OF HIS-116 AND PRO-166</scope>
</reference>
<keyword id="KW-0275">Fatty acid biosynthesis</keyword>
<keyword id="KW-0276">Fatty acid metabolism</keyword>
<keyword id="KW-0444">Lipid biosynthesis</keyword>
<keyword id="KW-0443">Lipid metabolism</keyword>
<keyword id="KW-0472">Membrane</keyword>
<keyword id="KW-0560">Oxidoreductase</keyword>
<keyword id="KW-0677">Repeat</keyword>
<keyword id="KW-0812">Transmembrane</keyword>
<keyword id="KW-1133">Transmembrane helix</keyword>
<evidence type="ECO:0000255" key="1"/>
<evidence type="ECO:0000269" key="2">
    <source>
    </source>
</evidence>
<evidence type="ECO:0000269" key="3">
    <source>
    </source>
</evidence>
<evidence type="ECO:0000269" key="4">
    <source>
    </source>
</evidence>
<evidence type="ECO:0000305" key="5"/>